<proteinExistence type="inferred from homology"/>
<organismHost>
    <name type="scientific">Homo sapiens</name>
    <name type="common">Human</name>
    <dbReference type="NCBI Taxonomy" id="9606"/>
</organismHost>
<organismHost>
    <name type="scientific">Pan troglodytes</name>
    <name type="common">Chimpanzee</name>
    <dbReference type="NCBI Taxonomy" id="9598"/>
</organismHost>
<sequence length="183" mass="20882">MDIDPYKEFGASVELLSFLPSDFFPSVRDLLDTASALYRDALESPEHCTPNHTALRQAILCWGELMTLASWVGNNLEDPAARDLVVNYVNTNMGLKIRQLLWFHISCLTFGRDTVLEYLVSFGVWIRTPPAYRPPNAPILSTLPETTVVRQRGRAPRRRTPSPRRRRSQSPRRRRSQSPASQC</sequence>
<evidence type="ECO:0000255" key="1">
    <source>
        <dbReference type="HAMAP-Rule" id="MF_04076"/>
    </source>
</evidence>
<evidence type="ECO:0000256" key="2">
    <source>
        <dbReference type="SAM" id="MobiDB-lite"/>
    </source>
</evidence>
<name>CAPSD_HBVH3</name>
<protein>
    <recommendedName>
        <fullName evidence="1">Capsid protein</fullName>
    </recommendedName>
    <alternativeName>
        <fullName evidence="1">Core antigen</fullName>
    </alternativeName>
    <alternativeName>
        <fullName evidence="1">Core protein</fullName>
    </alternativeName>
    <alternativeName>
        <fullName evidence="1">HBcAg</fullName>
    </alternativeName>
    <alternativeName>
        <fullName evidence="1">p21.5</fullName>
    </alternativeName>
</protein>
<comment type="function">
    <text evidence="1">Self assembles to form an icosahedral capsid. Most capsids appear to be large particles with an icosahedral symmetry of T=4 and consist of 240 copies of capsid protein, though a fraction forms smaller T=3 particles consisting of 180 capsid proteins. Entering capsids are transported along microtubules to the nucleus. Phosphorylation of the capsid is thought to induce exposure of nuclear localization signal in the C-terminal portion of the capsid protein that allows binding to the nuclear pore complex via the importin (karyopherin-) alpha and beta. Capsids are imported in intact form through the nuclear pore into the nuclear basket, where it probably binds NUP153. Only capsids that contain the mature viral genome can release the viral DNA and capsid protein into the nucleoplasm. Immature capsids get stuck in the basket. Capsids encapsulate the pre-genomic RNA and the P protein. Pre-genomic RNA is reverse-transcribed into DNA while the capsid is still in the cytoplasm. The capsid can then either be directed to the nucleus, providing more genomes for transcription, or bud through the endoplasmic reticulum to provide new virions.</text>
</comment>
<comment type="subunit">
    <text evidence="1">Homodimerizes, then multimerizes. Interacts with cytosol exposed regions of viral L glycoprotein present in the reticulum-to-Golgi compartment. Interacts with human FLNB. Phosphorylated form interacts with host importin alpha; this interaction depends on the exposure of the NLS, which itself depends upon genome maturation and/or phosphorylation of the capsid protein. Interacts with host NUP153.</text>
</comment>
<comment type="subcellular location">
    <subcellularLocation>
        <location evidence="1">Virion</location>
    </subcellularLocation>
    <subcellularLocation>
        <location evidence="1">Host cytoplasm</location>
    </subcellularLocation>
</comment>
<comment type="alternative products">
    <event type="alternative initiation"/>
    <isoform>
        <id>P0C6I6-1</id>
        <name>Capsid protein</name>
        <sequence type="displayed"/>
    </isoform>
    <isoform>
        <id>Q8JMZ4-1</id>
        <name>External core antigen</name>
        <sequence type="external"/>
    </isoform>
</comment>
<comment type="PTM">
    <text evidence="1">Phosphorylated by host SRPK1, SRPK2, and maybe protein kinase C or GAPDH. Phosphorylation is critical for pregenomic RNA packaging. Protein kinase C phosphorylation is stimulated by HBx protein and may play a role in transport of the viral genome to the nucleus at the late step during the viral replication cycle.</text>
</comment>
<comment type="similarity">
    <text evidence="1">Belongs to the orthohepadnavirus core antigen family.</text>
</comment>
<reference key="1">
    <citation type="journal article" date="2002" name="J. Gen. Virol.">
        <title>Genotype H: a new Amerindian genotype of hepatitis B virus revealed in Central America.</title>
        <authorList>
            <person name="Arauz-Ruiz P."/>
            <person name="Norder H."/>
            <person name="Robertson B.H."/>
            <person name="Magnius L.O."/>
        </authorList>
    </citation>
    <scope>NUCLEOTIDE SEQUENCE [GENOMIC DNA]</scope>
</reference>
<keyword id="KW-0024">Alternative initiation</keyword>
<keyword id="KW-0167">Capsid protein</keyword>
<keyword id="KW-1176">Cytoplasmic inwards viral transport</keyword>
<keyword id="KW-0238">DNA-binding</keyword>
<keyword id="KW-1035">Host cytoplasm</keyword>
<keyword id="KW-0945">Host-virus interaction</keyword>
<keyword id="KW-1177">Microtubular inwards viral transport</keyword>
<keyword id="KW-0597">Phosphoprotein</keyword>
<keyword id="KW-0677">Repeat</keyword>
<keyword id="KW-0694">RNA-binding</keyword>
<keyword id="KW-1144">T=4 icosahedral capsid protein</keyword>
<keyword id="KW-1163">Viral penetration into host nucleus</keyword>
<keyword id="KW-0946">Virion</keyword>
<keyword id="KW-1160">Virus entry into host cell</keyword>
<gene>
    <name evidence="1" type="primary">C</name>
</gene>
<accession>P0C6I6</accession>
<feature type="chain" id="PRO_0000324380" description="Capsid protein">
    <location>
        <begin position="1"/>
        <end position="183"/>
    </location>
</feature>
<feature type="repeat" description="1; half-length">
    <location>
        <begin position="155"/>
        <end position="161"/>
    </location>
</feature>
<feature type="repeat" description="2">
    <location>
        <begin position="162"/>
        <end position="169"/>
    </location>
</feature>
<feature type="repeat" description="3">
    <location>
        <begin position="170"/>
        <end position="177"/>
    </location>
</feature>
<feature type="region of interest" description="Disordered" evidence="2">
    <location>
        <begin position="136"/>
        <end position="183"/>
    </location>
</feature>
<feature type="region of interest" description="3 X 8 AA repeats of S-P-R-R-R-[PR]-S-Q">
    <location>
        <begin position="155"/>
        <end position="177"/>
    </location>
</feature>
<feature type="region of interest" description="RNA binding" evidence="1">
    <location>
        <begin position="177"/>
        <end position="183"/>
    </location>
</feature>
<feature type="short sequence motif" description="Bipartite nuclear localization signal" evidence="1">
    <location>
        <begin position="158"/>
        <end position="175"/>
    </location>
</feature>
<feature type="compositionally biased region" description="Basic residues" evidence="2">
    <location>
        <begin position="151"/>
        <end position="176"/>
    </location>
</feature>
<feature type="modified residue" description="Phosphoserine; by host" evidence="1">
    <location>
        <position position="162"/>
    </location>
</feature>
<feature type="modified residue" description="Phosphoserine; by host" evidence="1">
    <location>
        <position position="170"/>
    </location>
</feature>
<organism>
    <name type="scientific">Hepatitis B virus genotype H subtype adw4 (isolate Nicaragua/2928Nic/1997)</name>
    <name type="common">HBV-H</name>
    <dbReference type="NCBI Taxonomy" id="489541"/>
    <lineage>
        <taxon>Viruses</taxon>
        <taxon>Riboviria</taxon>
        <taxon>Pararnavirae</taxon>
        <taxon>Artverviricota</taxon>
        <taxon>Revtraviricetes</taxon>
        <taxon>Blubervirales</taxon>
        <taxon>Hepadnaviridae</taxon>
        <taxon>Orthohepadnavirus</taxon>
        <taxon>Hepatitis B virus</taxon>
        <taxon>hepatitis B virus genotype H</taxon>
    </lineage>
</organism>
<dbReference type="EMBL" id="AY090457">
    <property type="status" value="NOT_ANNOTATED_CDS"/>
    <property type="molecule type" value="Genomic_DNA"/>
</dbReference>
<dbReference type="SMR" id="P0C6I6"/>
<dbReference type="IntAct" id="P0C6I6">
    <property type="interactions" value="1"/>
</dbReference>
<dbReference type="Proteomes" id="UP000007409">
    <property type="component" value="Segment"/>
</dbReference>
<dbReference type="GO" id="GO:0043657">
    <property type="term" value="C:host cell"/>
    <property type="evidence" value="ECO:0007669"/>
    <property type="project" value="GOC"/>
</dbReference>
<dbReference type="GO" id="GO:0030430">
    <property type="term" value="C:host cell cytoplasm"/>
    <property type="evidence" value="ECO:0007669"/>
    <property type="project" value="UniProtKB-SubCell"/>
</dbReference>
<dbReference type="GO" id="GO:0039619">
    <property type="term" value="C:T=4 icosahedral viral capsid"/>
    <property type="evidence" value="ECO:0007669"/>
    <property type="project" value="UniProtKB-UniRule"/>
</dbReference>
<dbReference type="GO" id="GO:0003677">
    <property type="term" value="F:DNA binding"/>
    <property type="evidence" value="ECO:0007669"/>
    <property type="project" value="UniProtKB-UniRule"/>
</dbReference>
<dbReference type="GO" id="GO:0003723">
    <property type="term" value="F:RNA binding"/>
    <property type="evidence" value="ECO:0007669"/>
    <property type="project" value="UniProtKB-UniRule"/>
</dbReference>
<dbReference type="GO" id="GO:0005198">
    <property type="term" value="F:structural molecule activity"/>
    <property type="evidence" value="ECO:0007669"/>
    <property type="project" value="UniProtKB-UniRule"/>
</dbReference>
<dbReference type="GO" id="GO:0075521">
    <property type="term" value="P:microtubule-dependent intracellular transport of viral material towards nucleus"/>
    <property type="evidence" value="ECO:0007669"/>
    <property type="project" value="UniProtKB-UniRule"/>
</dbReference>
<dbReference type="GO" id="GO:0046718">
    <property type="term" value="P:symbiont entry into host cell"/>
    <property type="evidence" value="ECO:0007669"/>
    <property type="project" value="UniProtKB-UniRule"/>
</dbReference>
<dbReference type="GO" id="GO:0075732">
    <property type="term" value="P:viral penetration into host nucleus"/>
    <property type="evidence" value="ECO:0007669"/>
    <property type="project" value="UniProtKB-UniRule"/>
</dbReference>
<dbReference type="FunFam" id="1.10.4090.10:FF:000001">
    <property type="entry name" value="Capsid protein"/>
    <property type="match status" value="1"/>
</dbReference>
<dbReference type="Gene3D" id="1.10.4090.10">
    <property type="entry name" value="Viral capsid, core domain supefamily, Hepatitis B virus"/>
    <property type="match status" value="1"/>
</dbReference>
<dbReference type="HAMAP" id="MF_04076">
    <property type="entry name" value="HBV_HBEAG"/>
    <property type="match status" value="1"/>
</dbReference>
<dbReference type="InterPro" id="IPR002006">
    <property type="entry name" value="Hepatitis_core"/>
</dbReference>
<dbReference type="InterPro" id="IPR036459">
    <property type="entry name" value="Viral_capsid_core_dom_sf_HBV"/>
</dbReference>
<dbReference type="Pfam" id="PF00906">
    <property type="entry name" value="Hepatitis_core"/>
    <property type="match status" value="3"/>
</dbReference>
<dbReference type="SUPFAM" id="SSF47852">
    <property type="entry name" value="Hepatitis B viral capsid (hbcag)"/>
    <property type="match status" value="1"/>
</dbReference>